<gene>
    <name type="ORF">DDB_G0280279</name>
</gene>
<dbReference type="EMBL" id="AAFI02000035">
    <property type="protein sequence ID" value="EAL67366.2"/>
    <property type="molecule type" value="Genomic_DNA"/>
</dbReference>
<dbReference type="RefSeq" id="XP_641349.2">
    <property type="nucleotide sequence ID" value="XM_636257.2"/>
</dbReference>
<dbReference type="PaxDb" id="44689-DDB0302624"/>
<dbReference type="EnsemblProtists" id="EAL67366">
    <property type="protein sequence ID" value="EAL67366"/>
    <property type="gene ID" value="DDB_G0280279"/>
</dbReference>
<dbReference type="GeneID" id="8622483"/>
<dbReference type="KEGG" id="ddi:DDB_G0280279"/>
<dbReference type="dictyBase" id="DDB_G0280279"/>
<dbReference type="HOGENOM" id="CLU_3054360_0_0_1"/>
<dbReference type="InParanoid" id="Q54VK6"/>
<dbReference type="PRO" id="PR:Q54VK6"/>
<dbReference type="Proteomes" id="UP000002195">
    <property type="component" value="Chromosome 3"/>
</dbReference>
<name>Y0648_DICDI</name>
<accession>Q54VK6</accession>
<proteinExistence type="predicted"/>
<organism>
    <name type="scientific">Dictyostelium discoideum</name>
    <name type="common">Social amoeba</name>
    <dbReference type="NCBI Taxonomy" id="44689"/>
    <lineage>
        <taxon>Eukaryota</taxon>
        <taxon>Amoebozoa</taxon>
        <taxon>Evosea</taxon>
        <taxon>Eumycetozoa</taxon>
        <taxon>Dictyostelia</taxon>
        <taxon>Dictyosteliales</taxon>
        <taxon>Dictyosteliaceae</taxon>
        <taxon>Dictyostelium</taxon>
    </lineage>
</organism>
<keyword id="KW-1185">Reference proteome</keyword>
<feature type="chain" id="PRO_0000352469" description="Uncharacterized protein DDB_G0280279">
    <location>
        <begin position="1"/>
        <end position="54"/>
    </location>
</feature>
<feature type="region of interest" description="Disordered" evidence="1">
    <location>
        <begin position="1"/>
        <end position="38"/>
    </location>
</feature>
<feature type="compositionally biased region" description="Low complexity" evidence="1">
    <location>
        <begin position="17"/>
        <end position="38"/>
    </location>
</feature>
<sequence length="54" mass="5903">MFPNSNGPNKMKALVAPSNSSTTSKTNNNNLPPNGRSSFWSIKQYSETGLPIYI</sequence>
<evidence type="ECO:0000256" key="1">
    <source>
        <dbReference type="SAM" id="MobiDB-lite"/>
    </source>
</evidence>
<protein>
    <recommendedName>
        <fullName>Uncharacterized protein DDB_G0280279</fullName>
    </recommendedName>
</protein>
<reference key="1">
    <citation type="journal article" date="2005" name="Nature">
        <title>The genome of the social amoeba Dictyostelium discoideum.</title>
        <authorList>
            <person name="Eichinger L."/>
            <person name="Pachebat J.A."/>
            <person name="Gloeckner G."/>
            <person name="Rajandream M.A."/>
            <person name="Sucgang R."/>
            <person name="Berriman M."/>
            <person name="Song J."/>
            <person name="Olsen R."/>
            <person name="Szafranski K."/>
            <person name="Xu Q."/>
            <person name="Tunggal B."/>
            <person name="Kummerfeld S."/>
            <person name="Madera M."/>
            <person name="Konfortov B.A."/>
            <person name="Rivero F."/>
            <person name="Bankier A.T."/>
            <person name="Lehmann R."/>
            <person name="Hamlin N."/>
            <person name="Davies R."/>
            <person name="Gaudet P."/>
            <person name="Fey P."/>
            <person name="Pilcher K."/>
            <person name="Chen G."/>
            <person name="Saunders D."/>
            <person name="Sodergren E.J."/>
            <person name="Davis P."/>
            <person name="Kerhornou A."/>
            <person name="Nie X."/>
            <person name="Hall N."/>
            <person name="Anjard C."/>
            <person name="Hemphill L."/>
            <person name="Bason N."/>
            <person name="Farbrother P."/>
            <person name="Desany B."/>
            <person name="Just E."/>
            <person name="Morio T."/>
            <person name="Rost R."/>
            <person name="Churcher C.M."/>
            <person name="Cooper J."/>
            <person name="Haydock S."/>
            <person name="van Driessche N."/>
            <person name="Cronin A."/>
            <person name="Goodhead I."/>
            <person name="Muzny D.M."/>
            <person name="Mourier T."/>
            <person name="Pain A."/>
            <person name="Lu M."/>
            <person name="Harper D."/>
            <person name="Lindsay R."/>
            <person name="Hauser H."/>
            <person name="James K.D."/>
            <person name="Quiles M."/>
            <person name="Madan Babu M."/>
            <person name="Saito T."/>
            <person name="Buchrieser C."/>
            <person name="Wardroper A."/>
            <person name="Felder M."/>
            <person name="Thangavelu M."/>
            <person name="Johnson D."/>
            <person name="Knights A."/>
            <person name="Loulseged H."/>
            <person name="Mungall K.L."/>
            <person name="Oliver K."/>
            <person name="Price C."/>
            <person name="Quail M.A."/>
            <person name="Urushihara H."/>
            <person name="Hernandez J."/>
            <person name="Rabbinowitsch E."/>
            <person name="Steffen D."/>
            <person name="Sanders M."/>
            <person name="Ma J."/>
            <person name="Kohara Y."/>
            <person name="Sharp S."/>
            <person name="Simmonds M.N."/>
            <person name="Spiegler S."/>
            <person name="Tivey A."/>
            <person name="Sugano S."/>
            <person name="White B."/>
            <person name="Walker D."/>
            <person name="Woodward J.R."/>
            <person name="Winckler T."/>
            <person name="Tanaka Y."/>
            <person name="Shaulsky G."/>
            <person name="Schleicher M."/>
            <person name="Weinstock G.M."/>
            <person name="Rosenthal A."/>
            <person name="Cox E.C."/>
            <person name="Chisholm R.L."/>
            <person name="Gibbs R.A."/>
            <person name="Loomis W.F."/>
            <person name="Platzer M."/>
            <person name="Kay R.R."/>
            <person name="Williams J.G."/>
            <person name="Dear P.H."/>
            <person name="Noegel A.A."/>
            <person name="Barrell B.G."/>
            <person name="Kuspa A."/>
        </authorList>
    </citation>
    <scope>NUCLEOTIDE SEQUENCE [LARGE SCALE GENOMIC DNA]</scope>
    <source>
        <strain>AX4</strain>
    </source>
</reference>